<reference key="1">
    <citation type="submission" date="2004-11" db="EMBL/GenBank/DDBJ databases">
        <authorList>
            <consortium name="The German cDNA consortium"/>
        </authorList>
    </citation>
    <scope>NUCLEOTIDE SEQUENCE [LARGE SCALE MRNA]</scope>
    <source>
        <tissue>Kidney</tissue>
    </source>
</reference>
<accession>Q5R5G4</accession>
<feature type="chain" id="PRO_0000284614" description="Mitochondrial nucleoid-associated protein 1">
    <location>
        <begin position="1"/>
        <end position="609"/>
    </location>
</feature>
<feature type="topological domain" description="Extracellular" evidence="1">
    <location>
        <begin position="1"/>
        <end position="554"/>
    </location>
</feature>
<feature type="transmembrane region" description="Helical" evidence="2">
    <location>
        <begin position="555"/>
        <end position="571"/>
    </location>
</feature>
<feature type="topological domain" description="Cytoplasmic" evidence="1">
    <location>
        <begin position="572"/>
        <end position="609"/>
    </location>
</feature>
<feature type="region of interest" description="Disordered" evidence="3">
    <location>
        <begin position="133"/>
        <end position="163"/>
    </location>
</feature>
<feature type="region of interest" description="Disordered" evidence="3">
    <location>
        <begin position="406"/>
        <end position="425"/>
    </location>
</feature>
<feature type="compositionally biased region" description="Basic and acidic residues" evidence="3">
    <location>
        <begin position="146"/>
        <end position="161"/>
    </location>
</feature>
<organism>
    <name type="scientific">Pongo abelii</name>
    <name type="common">Sumatran orangutan</name>
    <name type="synonym">Pongo pygmaeus abelii</name>
    <dbReference type="NCBI Taxonomy" id="9601"/>
    <lineage>
        <taxon>Eukaryota</taxon>
        <taxon>Metazoa</taxon>
        <taxon>Chordata</taxon>
        <taxon>Craniata</taxon>
        <taxon>Vertebrata</taxon>
        <taxon>Euteleostomi</taxon>
        <taxon>Mammalia</taxon>
        <taxon>Eutheria</taxon>
        <taxon>Euarchontoglires</taxon>
        <taxon>Primates</taxon>
        <taxon>Haplorrhini</taxon>
        <taxon>Catarrhini</taxon>
        <taxon>Hominidae</taxon>
        <taxon>Pongo</taxon>
    </lineage>
</organism>
<proteinExistence type="evidence at transcript level"/>
<sequence>MSDNPPRMEVCPYCKKPFKRLKSHLPYCKMVGPTIPTDQKVYQSKPATLPRAKKMKGPIKDLIKAEGKELETENEERNSKLMMDKPEQTVKTFPLPAVGLERATTTKADKDIKNPIQPSFKMLKNTKPKTTFQEETKAQFYTSEKTSPKRELAEDLPKSGESRCNPLEAGASLLVGSIEPSLSNQDRKYSSTLPNDVQTTSGDLKLDKIDPQRQELLVKLLDVPTGDCHISPKNVSDGVKRVRTLLSNERDSKGRDHLSGVPTDVAVTETPEKNTESLILSLKMSSLGKIQVMEKQEKGLTLGVETCGSKGNAEKSMSATGEQEWTVMSHGCENFNTRDSVTEKESQGERPHLSLLIPRETTYEFHSVSQSSSQSLASLATIFLQEKKAEARNHNRVPDVKALMESPEGQLSLEPKSDSQFQASHTGCQSPVCSAQRHTPQSPFTNHAAAAGRKTLRSCVGLEWFPELYPGYLGLGVLPGKPQCWNAMARKPQLNSPQGERLLQVSLLERSSTHIRSLEPPTGLTTSNFSLMRLLGAVQKGWIRCNTTIRKSGFGGITMLSTGYFVLCCSWSFRRLKKLCRPLPWKSTVPPSVGVAKTTGDCRSKTCLD</sequence>
<dbReference type="EMBL" id="CR860896">
    <property type="protein sequence ID" value="CAH93002.1"/>
    <property type="molecule type" value="mRNA"/>
</dbReference>
<dbReference type="RefSeq" id="NP_001126772.1">
    <property type="nucleotide sequence ID" value="NM_001133300.1"/>
</dbReference>
<dbReference type="FunCoup" id="Q5R5G4">
    <property type="interactions" value="776"/>
</dbReference>
<dbReference type="STRING" id="9601.ENSPPYP00000009643"/>
<dbReference type="GeneID" id="100173776"/>
<dbReference type="KEGG" id="pon:100173776"/>
<dbReference type="CTD" id="55028"/>
<dbReference type="eggNOG" id="KOG4092">
    <property type="taxonomic scope" value="Eukaryota"/>
</dbReference>
<dbReference type="InParanoid" id="Q5R5G4"/>
<dbReference type="OrthoDB" id="8921675at2759"/>
<dbReference type="Proteomes" id="UP000001595">
    <property type="component" value="Unplaced"/>
</dbReference>
<dbReference type="GO" id="GO:0005743">
    <property type="term" value="C:mitochondrial inner membrane"/>
    <property type="evidence" value="ECO:0007669"/>
    <property type="project" value="UniProtKB-SubCell"/>
</dbReference>
<dbReference type="GO" id="GO:0042645">
    <property type="term" value="C:mitochondrial nucleoid"/>
    <property type="evidence" value="ECO:0007669"/>
    <property type="project" value="UniProtKB-SubCell"/>
</dbReference>
<dbReference type="InterPro" id="IPR037694">
    <property type="entry name" value="MTNAP1"/>
</dbReference>
<dbReference type="PANTHER" id="PTHR16270">
    <property type="entry name" value="HYPOTHETICAL LOC287798"/>
    <property type="match status" value="1"/>
</dbReference>
<dbReference type="PANTHER" id="PTHR16270:SF5">
    <property type="entry name" value="HYPOTHETICAL LOC287798"/>
    <property type="match status" value="1"/>
</dbReference>
<comment type="function">
    <text evidence="1">Critical regulator of mitochondrial DNA (mtDNA) abundance. Binds dsDNA throughout the mitochondrial genome without sequence specificity and controls mtDNA copy number by promoting its replication. Also plays important roles in mitochondrial metabolism and cell proliferation.</text>
</comment>
<comment type="subcellular location">
    <subcellularLocation>
        <location evidence="1">Mitochondrion inner membrane</location>
        <topology evidence="1">Single-pass type I membrane protein</topology>
    </subcellularLocation>
    <subcellularLocation>
        <location evidence="1">Mitochondrion matrix</location>
        <location evidence="1">Mitochondrion nucleoid</location>
    </subcellularLocation>
    <text evidence="1">Retained in nucleoids under mtDNA replication stress caused by ddC and EtBr.</text>
</comment>
<keyword id="KW-0472">Membrane</keyword>
<keyword id="KW-0496">Mitochondrion</keyword>
<keyword id="KW-0999">Mitochondrion inner membrane</keyword>
<keyword id="KW-1135">Mitochondrion nucleoid</keyword>
<keyword id="KW-1185">Reference proteome</keyword>
<keyword id="KW-0812">Transmembrane</keyword>
<keyword id="KW-1133">Transmembrane helix</keyword>
<gene>
    <name evidence="1" type="primary">MTNAP1</name>
</gene>
<protein>
    <recommendedName>
        <fullName evidence="1">Mitochondrial nucleoid-associated protein 1</fullName>
    </recommendedName>
</protein>
<evidence type="ECO:0000250" key="1">
    <source>
        <dbReference type="UniProtKB" id="Q9BSJ5"/>
    </source>
</evidence>
<evidence type="ECO:0000255" key="2"/>
<evidence type="ECO:0000256" key="3">
    <source>
        <dbReference type="SAM" id="MobiDB-lite"/>
    </source>
</evidence>
<name>CQ080_PONAB</name>